<organism>
    <name type="scientific">Mus musculus</name>
    <name type="common">Mouse</name>
    <dbReference type="NCBI Taxonomy" id="10090"/>
    <lineage>
        <taxon>Eukaryota</taxon>
        <taxon>Metazoa</taxon>
        <taxon>Chordata</taxon>
        <taxon>Craniata</taxon>
        <taxon>Vertebrata</taxon>
        <taxon>Euteleostomi</taxon>
        <taxon>Mammalia</taxon>
        <taxon>Eutheria</taxon>
        <taxon>Euarchontoglires</taxon>
        <taxon>Glires</taxon>
        <taxon>Rodentia</taxon>
        <taxon>Myomorpha</taxon>
        <taxon>Muroidea</taxon>
        <taxon>Muridae</taxon>
        <taxon>Murinae</taxon>
        <taxon>Mus</taxon>
        <taxon>Mus</taxon>
    </lineage>
</organism>
<feature type="signal peptide">
    <location>
        <begin position="1"/>
        <end position="27"/>
    </location>
</feature>
<feature type="chain" id="PRO_0000018994" description="H-2 class II histocompatibility antigen, A-D beta chain">
    <location>
        <begin position="28"/>
        <end position="265"/>
    </location>
</feature>
<feature type="topological domain" description="Extracellular" evidence="1">
    <location>
        <begin position="28"/>
        <end position="226"/>
    </location>
</feature>
<feature type="transmembrane region" description="Helical" evidence="1">
    <location>
        <begin position="227"/>
        <end position="247"/>
    </location>
</feature>
<feature type="topological domain" description="Cytoplasmic" evidence="1">
    <location>
        <begin position="248"/>
        <end position="265"/>
    </location>
</feature>
<feature type="domain" description="Ig-like C1-type">
    <location>
        <begin position="125"/>
        <end position="213"/>
    </location>
</feature>
<feature type="region of interest" description="Beta-1">
    <location>
        <begin position="28"/>
        <end position="122"/>
    </location>
</feature>
<feature type="region of interest" description="Beta-2">
    <location>
        <begin position="123"/>
        <end position="216"/>
    </location>
</feature>
<feature type="region of interest" description="Connecting peptide">
    <location>
        <begin position="217"/>
        <end position="226"/>
    </location>
</feature>
<feature type="glycosylation site" description="N-linked (GlcNAc...) asparagine" evidence="1">
    <location>
        <position position="46"/>
    </location>
</feature>
<feature type="disulfide bond" evidence="2">
    <location>
        <begin position="42"/>
        <end position="106"/>
    </location>
</feature>
<feature type="disulfide bond" evidence="2">
    <location>
        <begin position="145"/>
        <end position="201"/>
    </location>
</feature>
<feature type="strand" evidence="7">
    <location>
        <begin position="35"/>
        <end position="45"/>
    </location>
</feature>
<feature type="turn" evidence="7">
    <location>
        <begin position="46"/>
        <end position="49"/>
    </location>
</feature>
<feature type="strand" evidence="7">
    <location>
        <begin position="50"/>
        <end position="59"/>
    </location>
</feature>
<feature type="strand" evidence="7">
    <location>
        <begin position="62"/>
        <end position="68"/>
    </location>
</feature>
<feature type="turn" evidence="7">
    <location>
        <begin position="69"/>
        <end position="71"/>
    </location>
</feature>
<feature type="strand" evidence="7">
    <location>
        <begin position="73"/>
        <end position="78"/>
    </location>
</feature>
<feature type="helix" evidence="7">
    <location>
        <begin position="79"/>
        <end position="81"/>
    </location>
</feature>
<feature type="helix" evidence="7">
    <location>
        <begin position="82"/>
        <end position="90"/>
    </location>
</feature>
<feature type="helix" evidence="7">
    <location>
        <begin position="92"/>
        <end position="104"/>
    </location>
</feature>
<feature type="helix" evidence="7">
    <location>
        <begin position="106"/>
        <end position="111"/>
    </location>
</feature>
<feature type="helix" evidence="7">
    <location>
        <begin position="113"/>
        <end position="116"/>
    </location>
</feature>
<feature type="helix" evidence="7">
    <location>
        <begin position="118"/>
        <end position="120"/>
    </location>
</feature>
<feature type="strand" evidence="7">
    <location>
        <begin position="126"/>
        <end position="131"/>
    </location>
</feature>
<feature type="strand" evidence="7">
    <location>
        <begin position="133"/>
        <end position="139"/>
    </location>
</feature>
<feature type="strand" evidence="7">
    <location>
        <begin position="143"/>
        <end position="153"/>
    </location>
</feature>
<feature type="strand" evidence="7">
    <location>
        <begin position="156"/>
        <end position="161"/>
    </location>
</feature>
<feature type="strand" evidence="7">
    <location>
        <begin position="164"/>
        <end position="166"/>
    </location>
</feature>
<feature type="strand" evidence="7">
    <location>
        <begin position="170"/>
        <end position="172"/>
    </location>
</feature>
<feature type="strand" evidence="8">
    <location>
        <begin position="176"/>
        <end position="178"/>
    </location>
</feature>
<feature type="strand" evidence="7">
    <location>
        <begin position="179"/>
        <end position="181"/>
    </location>
</feature>
<feature type="strand" evidence="7">
    <location>
        <begin position="183"/>
        <end position="189"/>
    </location>
</feature>
<feature type="strand" evidence="7">
    <location>
        <begin position="199"/>
        <end position="204"/>
    </location>
</feature>
<feature type="strand" evidence="6">
    <location>
        <begin position="212"/>
        <end position="216"/>
    </location>
</feature>
<keyword id="KW-0002">3D-structure</keyword>
<keyword id="KW-1064">Adaptive immunity</keyword>
<keyword id="KW-1015">Disulfide bond</keyword>
<keyword id="KW-0325">Glycoprotein</keyword>
<keyword id="KW-0391">Immunity</keyword>
<keyword id="KW-0472">Membrane</keyword>
<keyword id="KW-0491">MHC II</keyword>
<keyword id="KW-1185">Reference proteome</keyword>
<keyword id="KW-0732">Signal</keyword>
<keyword id="KW-0812">Transmembrane</keyword>
<keyword id="KW-1133">Transmembrane helix</keyword>
<keyword id="KW-0832">Ubl conjugation</keyword>
<proteinExistence type="evidence at protein level"/>
<dbReference type="EMBL" id="K00008">
    <property type="protein sequence ID" value="AAA39548.1"/>
    <property type="molecule type" value="Genomic_DNA"/>
</dbReference>
<dbReference type="EMBL" id="K00007">
    <property type="protein sequence ID" value="AAA39548.1"/>
    <property type="status" value="JOINED"/>
    <property type="molecule type" value="Genomic_DNA"/>
</dbReference>
<dbReference type="EMBL" id="M29248">
    <property type="protein sequence ID" value="AAA39543.1"/>
    <property type="molecule type" value="Genomic_DNA"/>
</dbReference>
<dbReference type="EMBL" id="K00113">
    <property type="protein sequence ID" value="AAA39544.1"/>
    <property type="molecule type" value="Genomic_DNA"/>
</dbReference>
<dbReference type="EMBL" id="K00109">
    <property type="protein sequence ID" value="AAA39544.1"/>
    <property type="status" value="JOINED"/>
    <property type="molecule type" value="Genomic_DNA"/>
</dbReference>
<dbReference type="EMBL" id="K00110">
    <property type="protein sequence ID" value="AAA39544.1"/>
    <property type="status" value="JOINED"/>
    <property type="molecule type" value="Genomic_DNA"/>
</dbReference>
<dbReference type="EMBL" id="K00112">
    <property type="protein sequence ID" value="AAA39544.1"/>
    <property type="status" value="JOINED"/>
    <property type="molecule type" value="Genomic_DNA"/>
</dbReference>
<dbReference type="EMBL" id="K00111">
    <property type="protein sequence ID" value="AAA39544.1"/>
    <property type="status" value="JOINED"/>
    <property type="molecule type" value="Genomic_DNA"/>
</dbReference>
<dbReference type="EMBL" id="K01143">
    <property type="protein sequence ID" value="AAA39545.1"/>
    <property type="molecule type" value="mRNA"/>
</dbReference>
<dbReference type="PIR" id="A02236">
    <property type="entry name" value="HLMSAB"/>
</dbReference>
<dbReference type="PDB" id="1IAO">
    <property type="method" value="X-ray"/>
    <property type="resolution" value="2.60 A"/>
    <property type="chains" value="B=28-216"/>
</dbReference>
<dbReference type="PDB" id="2IAD">
    <property type="method" value="X-ray"/>
    <property type="resolution" value="2.40 A"/>
    <property type="chains" value="B=28-216"/>
</dbReference>
<dbReference type="PDB" id="7RDV">
    <property type="method" value="X-ray"/>
    <property type="resolution" value="2.90 A"/>
    <property type="chains" value="B=31-216"/>
</dbReference>
<dbReference type="PDBsum" id="1IAO"/>
<dbReference type="PDBsum" id="2IAD"/>
<dbReference type="PDBsum" id="7RDV"/>
<dbReference type="SMR" id="P01921"/>
<dbReference type="FunCoup" id="P01921">
    <property type="interactions" value="240"/>
</dbReference>
<dbReference type="MINT" id="P01921"/>
<dbReference type="GlyCosmos" id="P01921">
    <property type="glycosylation" value="1 site, No reported glycans"/>
</dbReference>
<dbReference type="GlyGen" id="P01921">
    <property type="glycosylation" value="2 sites, 1 O-linked glycan (1 site)"/>
</dbReference>
<dbReference type="iPTMnet" id="P01921"/>
<dbReference type="jPOST" id="P01921"/>
<dbReference type="PeptideAtlas" id="P01921"/>
<dbReference type="ProteomicsDB" id="269679"/>
<dbReference type="ABCD" id="P01921">
    <property type="antibodies" value="3 sequenced antibodies"/>
</dbReference>
<dbReference type="AGR" id="MGI:103070"/>
<dbReference type="MGI" id="MGI:103070">
    <property type="gene designation" value="H2-Ab1"/>
</dbReference>
<dbReference type="InParanoid" id="P01921"/>
<dbReference type="OrthoDB" id="10043043at2759"/>
<dbReference type="Reactome" id="R-MMU-202424">
    <property type="pathway name" value="Downstream TCR signaling"/>
</dbReference>
<dbReference type="Reactome" id="R-MMU-202427">
    <property type="pathway name" value="Phosphorylation of CD3 and TCR zeta chains"/>
</dbReference>
<dbReference type="Reactome" id="R-MMU-202430">
    <property type="pathway name" value="Translocation of ZAP-70 to Immunological synapse"/>
</dbReference>
<dbReference type="Reactome" id="R-MMU-202433">
    <property type="pathway name" value="Generation of second messenger molecules"/>
</dbReference>
<dbReference type="Reactome" id="R-MMU-2132295">
    <property type="pathway name" value="MHC class II antigen presentation"/>
</dbReference>
<dbReference type="Reactome" id="R-MMU-389948">
    <property type="pathway name" value="Co-inhibition by PD-1"/>
</dbReference>
<dbReference type="ChiTaRS" id="H2-Ab1">
    <property type="organism name" value="mouse"/>
</dbReference>
<dbReference type="EvolutionaryTrace" id="P01921"/>
<dbReference type="Proteomes" id="UP000000589">
    <property type="component" value="Unplaced"/>
</dbReference>
<dbReference type="RNAct" id="P01921">
    <property type="molecule type" value="protein"/>
</dbReference>
<dbReference type="GO" id="GO:0005769">
    <property type="term" value="C:early endosome"/>
    <property type="evidence" value="ECO:0000314"/>
    <property type="project" value="MGI"/>
</dbReference>
<dbReference type="GO" id="GO:0009897">
    <property type="term" value="C:external side of plasma membrane"/>
    <property type="evidence" value="ECO:0000314"/>
    <property type="project" value="MGI"/>
</dbReference>
<dbReference type="GO" id="GO:0005794">
    <property type="term" value="C:Golgi apparatus"/>
    <property type="evidence" value="ECO:0000314"/>
    <property type="project" value="MGI"/>
</dbReference>
<dbReference type="GO" id="GO:0016020">
    <property type="term" value="C:membrane"/>
    <property type="evidence" value="ECO:0000314"/>
    <property type="project" value="MGI"/>
</dbReference>
<dbReference type="GO" id="GO:0042613">
    <property type="term" value="C:MHC class II protein complex"/>
    <property type="evidence" value="ECO:0000314"/>
    <property type="project" value="MGI"/>
</dbReference>
<dbReference type="GO" id="GO:0005771">
    <property type="term" value="C:multivesicular body"/>
    <property type="evidence" value="ECO:0000314"/>
    <property type="project" value="MGI"/>
</dbReference>
<dbReference type="GO" id="GO:0005886">
    <property type="term" value="C:plasma membrane"/>
    <property type="evidence" value="ECO:0000314"/>
    <property type="project" value="MGI"/>
</dbReference>
<dbReference type="GO" id="GO:0042605">
    <property type="term" value="F:peptide antigen binding"/>
    <property type="evidence" value="ECO:0000314"/>
    <property type="project" value="MGI"/>
</dbReference>
<dbReference type="GO" id="GO:0002250">
    <property type="term" value="P:adaptive immune response"/>
    <property type="evidence" value="ECO:0007669"/>
    <property type="project" value="UniProtKB-KW"/>
</dbReference>
<dbReference type="GO" id="GO:0019882">
    <property type="term" value="P:antigen processing and presentation"/>
    <property type="evidence" value="ECO:0000314"/>
    <property type="project" value="MGI"/>
</dbReference>
<dbReference type="GO" id="GO:0019886">
    <property type="term" value="P:antigen processing and presentation of exogenous peptide antigen via MHC class II"/>
    <property type="evidence" value="ECO:0000314"/>
    <property type="project" value="MGI"/>
</dbReference>
<dbReference type="GO" id="GO:0048002">
    <property type="term" value="P:antigen processing and presentation of peptide antigen"/>
    <property type="evidence" value="ECO:0000314"/>
    <property type="project" value="MGI"/>
</dbReference>
<dbReference type="GO" id="GO:0006955">
    <property type="term" value="P:immune response"/>
    <property type="evidence" value="ECO:0000315"/>
    <property type="project" value="MGI"/>
</dbReference>
<dbReference type="CDD" id="cd21001">
    <property type="entry name" value="IgC1_MHC_II_beta_HLA-DQ_I-A"/>
    <property type="match status" value="1"/>
</dbReference>
<dbReference type="FunFam" id="2.60.40.10:FF:000116">
    <property type="entry name" value="HLA class II histocompatibility antigen, DRB1-1 beta chain"/>
    <property type="match status" value="1"/>
</dbReference>
<dbReference type="FunFam" id="3.10.320.10:FF:000001">
    <property type="entry name" value="HLA class II histocompatibility antigen, DRB1-1 beta chain"/>
    <property type="match status" value="1"/>
</dbReference>
<dbReference type="Gene3D" id="3.10.320.10">
    <property type="entry name" value="Class II Histocompatibility Antigen, M Beta Chain, Chain B, domain 1"/>
    <property type="match status" value="1"/>
</dbReference>
<dbReference type="Gene3D" id="2.60.40.10">
    <property type="entry name" value="Immunoglobulins"/>
    <property type="match status" value="1"/>
</dbReference>
<dbReference type="InterPro" id="IPR007110">
    <property type="entry name" value="Ig-like_dom"/>
</dbReference>
<dbReference type="InterPro" id="IPR036179">
    <property type="entry name" value="Ig-like_dom_sf"/>
</dbReference>
<dbReference type="InterPro" id="IPR013783">
    <property type="entry name" value="Ig-like_fold"/>
</dbReference>
<dbReference type="InterPro" id="IPR003006">
    <property type="entry name" value="Ig/MHC_CS"/>
</dbReference>
<dbReference type="InterPro" id="IPR003597">
    <property type="entry name" value="Ig_C1-set"/>
</dbReference>
<dbReference type="InterPro" id="IPR050160">
    <property type="entry name" value="MHC/Immunoglobulin"/>
</dbReference>
<dbReference type="InterPro" id="IPR011162">
    <property type="entry name" value="MHC_I/II-like_Ag-recog"/>
</dbReference>
<dbReference type="InterPro" id="IPR014745">
    <property type="entry name" value="MHC_II_a/b_N"/>
</dbReference>
<dbReference type="InterPro" id="IPR000353">
    <property type="entry name" value="MHC_II_b_N"/>
</dbReference>
<dbReference type="PANTHER" id="PTHR19944:SF101">
    <property type="entry name" value="HLA CLASS II HISTOCOMPATIBILITY ANTIGEN, DQ BETA 1 CHAIN"/>
    <property type="match status" value="1"/>
</dbReference>
<dbReference type="PANTHER" id="PTHR19944">
    <property type="entry name" value="MHC CLASS II-RELATED"/>
    <property type="match status" value="1"/>
</dbReference>
<dbReference type="Pfam" id="PF07654">
    <property type="entry name" value="C1-set"/>
    <property type="match status" value="1"/>
</dbReference>
<dbReference type="Pfam" id="PF00969">
    <property type="entry name" value="MHC_II_beta"/>
    <property type="match status" value="1"/>
</dbReference>
<dbReference type="SMART" id="SM00407">
    <property type="entry name" value="IGc1"/>
    <property type="match status" value="1"/>
</dbReference>
<dbReference type="SMART" id="SM00921">
    <property type="entry name" value="MHC_II_beta"/>
    <property type="match status" value="1"/>
</dbReference>
<dbReference type="SUPFAM" id="SSF48726">
    <property type="entry name" value="Immunoglobulin"/>
    <property type="match status" value="1"/>
</dbReference>
<dbReference type="SUPFAM" id="SSF54452">
    <property type="entry name" value="MHC antigen-recognition domain"/>
    <property type="match status" value="1"/>
</dbReference>
<dbReference type="PROSITE" id="PS50835">
    <property type="entry name" value="IG_LIKE"/>
    <property type="match status" value="1"/>
</dbReference>
<dbReference type="PROSITE" id="PS00290">
    <property type="entry name" value="IG_MHC"/>
    <property type="match status" value="1"/>
</dbReference>
<sequence>MALQIPSLLLSAAVVVLMVLSSPRTEGGNSERHFVVQFKGECYYTNGTQRIRLVTRYIYNREEYVRYDSDVGEYRAVTELGRPDAEYWNSQPEILERTRAEVDTACRHNYEGPETSTSLRRLEQPNVAISLSRTEALNHHNTLVCSVTDFYPAKIKVRWFRNGQEETVGVSSTQLIRNGDWTFQVLVMLEMTPHQGEVYTCHVEHPSLKSPITVEWRAQSESARSKMLSGIGGCVLGVIFLGLGLFIRHRSQKGPRGPPPAGLLQ</sequence>
<name>HB2D_MOUSE</name>
<evidence type="ECO:0000255" key="1"/>
<evidence type="ECO:0000255" key="2">
    <source>
        <dbReference type="PROSITE-ProRule" id="PRU00114"/>
    </source>
</evidence>
<evidence type="ECO:0000269" key="3">
    <source>
    </source>
</evidence>
<evidence type="ECO:0000269" key="4">
    <source>
    </source>
</evidence>
<evidence type="ECO:0000305" key="5"/>
<evidence type="ECO:0007829" key="6">
    <source>
        <dbReference type="PDB" id="1IAO"/>
    </source>
</evidence>
<evidence type="ECO:0007829" key="7">
    <source>
        <dbReference type="PDB" id="2IAD"/>
    </source>
</evidence>
<evidence type="ECO:0007829" key="8">
    <source>
        <dbReference type="PDB" id="7RDV"/>
    </source>
</evidence>
<accession>P01921</accession>
<accession>O19456</accession>
<accession>O19457</accession>
<accession>O19458</accession>
<accession>Q31133</accession>
<accession>Q31138</accession>
<accession>Q31139</accession>
<gene>
    <name type="primary">H2-Ab1</name>
</gene>
<comment type="subcellular location">
    <subcellularLocation>
        <location evidence="5">Membrane</location>
        <topology evidence="5">Single-pass type I membrane protein</topology>
    </subcellularLocation>
</comment>
<comment type="PTM">
    <text evidence="3 4">Ubiquitinated in immature dendritic cells leading to down-regulation of MHC class II.</text>
</comment>
<comment type="similarity">
    <text evidence="5">Belongs to the MHC class II family.</text>
</comment>
<reference key="1">
    <citation type="journal article" date="1983" name="Science">
        <title>Nucleotide sequence of a light chain gene of the mouse I-A subregion: A beta d.</title>
        <authorList>
            <person name="Malissen M."/>
            <person name="Hunkapiller T."/>
            <person name="Hood L.E."/>
        </authorList>
    </citation>
    <scope>NUCLEOTIDE SEQUENCE [GENOMIC DNA]</scope>
    <source>
        <strain>BALB/cJ</strain>
    </source>
</reference>
<reference key="2">
    <citation type="journal article" date="1983" name="Science">
        <title>Murine i-a-beta chain polymorphism: nucleotide sequences of three allelic i-a-beta genes.</title>
        <authorList>
            <person name="Choi E.C."/>
            <person name="McIntyre K."/>
            <person name="Germain R.N."/>
            <person name="Seidman J.G."/>
        </authorList>
    </citation>
    <scope>NUCLEOTIDE SEQUENCE [GENOMIC DNA] OF 33-265</scope>
</reference>
<reference key="3">
    <citation type="journal article" date="1989" name="Mol. Cell. Biol.">
        <title>An intronic 10-base-pair deletion in a class II A beta gene affects RNA processing.</title>
        <authorList>
            <person name="Ghogawala Z."/>
            <person name="Choi E."/>
            <person name="Daly K.R."/>
            <person name="Blanco L.R."/>
            <person name="Griffith I.J."/>
            <person name="Glimcher L.H."/>
        </authorList>
    </citation>
    <scope>NUCLEOTIDE SEQUENCE [GENOMIC DNA] OF 124-261</scope>
</reference>
<reference key="4">
    <citation type="journal article" date="1983" name="J. Immunol.">
        <title>Extensive polymorphism surrounding the murine Ia A-beta chain gene.</title>
        <authorList>
            <person name="Robinson R.R."/>
            <person name="Germain R.N."/>
            <person name="McKean D.J."/>
            <person name="Mescher M."/>
            <person name="Seidman J.G."/>
        </authorList>
    </citation>
    <scope>NUCLEOTIDE SEQUENCE [MRNA] OF 215-265</scope>
</reference>
<reference key="5">
    <citation type="journal article" date="2006" name="Immunity">
        <title>Dendritic cells regulate exposure of MHC class II at their plasma membrane by oligoubiquitination.</title>
        <authorList>
            <person name="van Niel G."/>
            <person name="Wubbolts R."/>
            <person name="Ten Broeke T."/>
            <person name="Buschow S.I."/>
            <person name="Ossendorp F.A."/>
            <person name="Melief C.J."/>
            <person name="Raposo G."/>
            <person name="van Balkom B.W."/>
            <person name="Stoorvogel W."/>
        </authorList>
    </citation>
    <scope>UBIQUITINATION</scope>
</reference>
<reference key="6">
    <citation type="journal article" date="2006" name="Nature">
        <title>Surface expression of MHC class II in dendritic cells is controlled by regulated ubiquitination.</title>
        <authorList>
            <person name="Shin J.S."/>
            <person name="Ebersold M."/>
            <person name="Pypaert M."/>
            <person name="Delamarre L."/>
            <person name="Hartley A."/>
            <person name="Mellman I."/>
        </authorList>
    </citation>
    <scope>UBIQUITINATION</scope>
</reference>
<reference key="7">
    <citation type="journal article" date="2010" name="Cell">
        <title>A tissue-specific atlas of mouse protein phosphorylation and expression.</title>
        <authorList>
            <person name="Huttlin E.L."/>
            <person name="Jedrychowski M.P."/>
            <person name="Elias J.E."/>
            <person name="Goswami T."/>
            <person name="Rad R."/>
            <person name="Beausoleil S.A."/>
            <person name="Villen J."/>
            <person name="Haas W."/>
            <person name="Sowa M.E."/>
            <person name="Gygi S.P."/>
        </authorList>
    </citation>
    <scope>IDENTIFICATION BY MASS SPECTROMETRY [LARGE SCALE ANALYSIS]</scope>
    <source>
        <tissue>Lung</tissue>
        <tissue>Spleen</tissue>
    </source>
</reference>
<protein>
    <recommendedName>
        <fullName>H-2 class II histocompatibility antigen, A-D beta chain</fullName>
    </recommendedName>
</protein>